<reference key="1">
    <citation type="journal article" date="2005" name="Nature">
        <title>The genome of the social amoeba Dictyostelium discoideum.</title>
        <authorList>
            <person name="Eichinger L."/>
            <person name="Pachebat J.A."/>
            <person name="Gloeckner G."/>
            <person name="Rajandream M.A."/>
            <person name="Sucgang R."/>
            <person name="Berriman M."/>
            <person name="Song J."/>
            <person name="Olsen R."/>
            <person name="Szafranski K."/>
            <person name="Xu Q."/>
            <person name="Tunggal B."/>
            <person name="Kummerfeld S."/>
            <person name="Madera M."/>
            <person name="Konfortov B.A."/>
            <person name="Rivero F."/>
            <person name="Bankier A.T."/>
            <person name="Lehmann R."/>
            <person name="Hamlin N."/>
            <person name="Davies R."/>
            <person name="Gaudet P."/>
            <person name="Fey P."/>
            <person name="Pilcher K."/>
            <person name="Chen G."/>
            <person name="Saunders D."/>
            <person name="Sodergren E.J."/>
            <person name="Davis P."/>
            <person name="Kerhornou A."/>
            <person name="Nie X."/>
            <person name="Hall N."/>
            <person name="Anjard C."/>
            <person name="Hemphill L."/>
            <person name="Bason N."/>
            <person name="Farbrother P."/>
            <person name="Desany B."/>
            <person name="Just E."/>
            <person name="Morio T."/>
            <person name="Rost R."/>
            <person name="Churcher C.M."/>
            <person name="Cooper J."/>
            <person name="Haydock S."/>
            <person name="van Driessche N."/>
            <person name="Cronin A."/>
            <person name="Goodhead I."/>
            <person name="Muzny D.M."/>
            <person name="Mourier T."/>
            <person name="Pain A."/>
            <person name="Lu M."/>
            <person name="Harper D."/>
            <person name="Lindsay R."/>
            <person name="Hauser H."/>
            <person name="James K.D."/>
            <person name="Quiles M."/>
            <person name="Madan Babu M."/>
            <person name="Saito T."/>
            <person name="Buchrieser C."/>
            <person name="Wardroper A."/>
            <person name="Felder M."/>
            <person name="Thangavelu M."/>
            <person name="Johnson D."/>
            <person name="Knights A."/>
            <person name="Loulseged H."/>
            <person name="Mungall K.L."/>
            <person name="Oliver K."/>
            <person name="Price C."/>
            <person name="Quail M.A."/>
            <person name="Urushihara H."/>
            <person name="Hernandez J."/>
            <person name="Rabbinowitsch E."/>
            <person name="Steffen D."/>
            <person name="Sanders M."/>
            <person name="Ma J."/>
            <person name="Kohara Y."/>
            <person name="Sharp S."/>
            <person name="Simmonds M.N."/>
            <person name="Spiegler S."/>
            <person name="Tivey A."/>
            <person name="Sugano S."/>
            <person name="White B."/>
            <person name="Walker D."/>
            <person name="Woodward J.R."/>
            <person name="Winckler T."/>
            <person name="Tanaka Y."/>
            <person name="Shaulsky G."/>
            <person name="Schleicher M."/>
            <person name="Weinstock G.M."/>
            <person name="Rosenthal A."/>
            <person name="Cox E.C."/>
            <person name="Chisholm R.L."/>
            <person name="Gibbs R.A."/>
            <person name="Loomis W.F."/>
            <person name="Platzer M."/>
            <person name="Kay R.R."/>
            <person name="Williams J.G."/>
            <person name="Dear P.H."/>
            <person name="Noegel A.A."/>
            <person name="Barrell B.G."/>
            <person name="Kuspa A."/>
        </authorList>
    </citation>
    <scope>NUCLEOTIDE SEQUENCE [LARGE SCALE GENOMIC DNA]</scope>
    <source>
        <strain>AX4</strain>
    </source>
</reference>
<dbReference type="EMBL" id="AAFI02000003">
    <property type="protein sequence ID" value="EAL73250.1"/>
    <property type="molecule type" value="Genomic_DNA"/>
</dbReference>
<dbReference type="RefSeq" id="XP_647151.1">
    <property type="nucleotide sequence ID" value="XM_642059.1"/>
</dbReference>
<dbReference type="SMR" id="Q55GN3"/>
<dbReference type="FunCoup" id="Q55GN3">
    <property type="interactions" value="536"/>
</dbReference>
<dbReference type="STRING" id="44689.Q55GN3"/>
<dbReference type="PaxDb" id="44689-DDB0237719"/>
<dbReference type="EnsemblProtists" id="EAL73250">
    <property type="protein sequence ID" value="EAL73250"/>
    <property type="gene ID" value="DDB_G0267594"/>
</dbReference>
<dbReference type="GeneID" id="8615954"/>
<dbReference type="KEGG" id="ddi:DDB_G0267594"/>
<dbReference type="dictyBase" id="DDB_G0267594">
    <property type="gene designation" value="pfdn2"/>
</dbReference>
<dbReference type="VEuPathDB" id="AmoebaDB:DDB_G0267594"/>
<dbReference type="eggNOG" id="KOG4098">
    <property type="taxonomic scope" value="Eukaryota"/>
</dbReference>
<dbReference type="HOGENOM" id="CLU_113004_0_1_1"/>
<dbReference type="InParanoid" id="Q55GN3"/>
<dbReference type="OMA" id="CFKMIGG"/>
<dbReference type="PhylomeDB" id="Q55GN3"/>
<dbReference type="PRO" id="PR:Q55GN3"/>
<dbReference type="Proteomes" id="UP000002195">
    <property type="component" value="Chromosome 1"/>
</dbReference>
<dbReference type="GO" id="GO:0005737">
    <property type="term" value="C:cytoplasm"/>
    <property type="evidence" value="ECO:0000318"/>
    <property type="project" value="GO_Central"/>
</dbReference>
<dbReference type="GO" id="GO:0016272">
    <property type="term" value="C:prefoldin complex"/>
    <property type="evidence" value="ECO:0007669"/>
    <property type="project" value="InterPro"/>
</dbReference>
<dbReference type="GO" id="GO:0044183">
    <property type="term" value="F:protein folding chaperone"/>
    <property type="evidence" value="ECO:0000318"/>
    <property type="project" value="GO_Central"/>
</dbReference>
<dbReference type="GO" id="GO:0051082">
    <property type="term" value="F:unfolded protein binding"/>
    <property type="evidence" value="ECO:0007669"/>
    <property type="project" value="InterPro"/>
</dbReference>
<dbReference type="GO" id="GO:0051495">
    <property type="term" value="P:positive regulation of cytoskeleton organization"/>
    <property type="evidence" value="ECO:0000250"/>
    <property type="project" value="dictyBase"/>
</dbReference>
<dbReference type="GO" id="GO:0006457">
    <property type="term" value="P:protein folding"/>
    <property type="evidence" value="ECO:0000318"/>
    <property type="project" value="GO_Central"/>
</dbReference>
<dbReference type="CDD" id="cd23163">
    <property type="entry name" value="Prefoldin_2"/>
    <property type="match status" value="1"/>
</dbReference>
<dbReference type="FunFam" id="1.10.287.370:FF:000002">
    <property type="entry name" value="Prefoldin subunit 2"/>
    <property type="match status" value="1"/>
</dbReference>
<dbReference type="Gene3D" id="1.10.287.370">
    <property type="match status" value="1"/>
</dbReference>
<dbReference type="InterPro" id="IPR027235">
    <property type="entry name" value="PFD2"/>
</dbReference>
<dbReference type="InterPro" id="IPR002777">
    <property type="entry name" value="PFD_beta-like"/>
</dbReference>
<dbReference type="InterPro" id="IPR009053">
    <property type="entry name" value="Prefoldin"/>
</dbReference>
<dbReference type="PANTHER" id="PTHR13303">
    <property type="entry name" value="PREFOLDIN SUBUNIT 2"/>
    <property type="match status" value="1"/>
</dbReference>
<dbReference type="Pfam" id="PF01920">
    <property type="entry name" value="Prefoldin_2"/>
    <property type="match status" value="1"/>
</dbReference>
<dbReference type="SUPFAM" id="SSF46579">
    <property type="entry name" value="Prefoldin"/>
    <property type="match status" value="1"/>
</dbReference>
<accession>Q55GN3</accession>
<organism>
    <name type="scientific">Dictyostelium discoideum</name>
    <name type="common">Social amoeba</name>
    <dbReference type="NCBI Taxonomy" id="44689"/>
    <lineage>
        <taxon>Eukaryota</taxon>
        <taxon>Amoebozoa</taxon>
        <taxon>Evosea</taxon>
        <taxon>Eumycetozoa</taxon>
        <taxon>Dictyostelia</taxon>
        <taxon>Dictyosteliales</taxon>
        <taxon>Dictyosteliaceae</taxon>
        <taxon>Dictyostelium</taxon>
    </lineage>
</organism>
<name>PFD2_DICDI</name>
<sequence>MSQQKQQLTENQIIEHYKDLKSQQQQIISRISEFESDVGEYGLVINAIQNLESNRKCFRMVGGVLVERTVGEVLPQIKQNRDGIKEVVKKLDENLSIKTKELNDFVALYKIKITSQ</sequence>
<proteinExistence type="inferred from homology"/>
<protein>
    <recommendedName>
        <fullName>Probable prefoldin subunit 2</fullName>
    </recommendedName>
</protein>
<feature type="chain" id="PRO_0000330359" description="Probable prefoldin subunit 2">
    <location>
        <begin position="1"/>
        <end position="116"/>
    </location>
</feature>
<evidence type="ECO:0000250" key="1"/>
<evidence type="ECO:0000305" key="2"/>
<keyword id="KW-0143">Chaperone</keyword>
<keyword id="KW-1185">Reference proteome</keyword>
<comment type="function">
    <text evidence="1">Binds specifically to cytosolic chaperonin (c-CPN) and transfers target proteins to it. Binds to nascent polypeptide chain and promotes folding in an environment in which there are many competing pathways for nonnative proteins (By similarity).</text>
</comment>
<comment type="subunit">
    <text evidence="1">Heterohexamer of two PFD-alpha type and four PFD-beta type subunits.</text>
</comment>
<comment type="similarity">
    <text evidence="2">Belongs to the prefoldin subunit beta family.</text>
</comment>
<gene>
    <name type="primary">pfdn2</name>
    <name type="ORF">DDB_G0267594</name>
</gene>